<sequence>MKYVVKLGGAALENPEIFMACARAVADLVKDGHQVALVHGGGVQLTRTLKQLGKQSEFIAGLRVTDAETRDAALMVLSGRVNKSLVAALGSLGQAAMGLSGGDGLIFRARKKRTVPDLGFVGEIVASDPRWLEAIWKMNAVPVISSIALGFDGEYYNVNADEMAAACAAACRADALVFLTDVPGVRGADGTIMRWLTVDQIPVLSQTEVISGGMLPKLGACREALLNGVKRVRILPAEAAHVLPDLCSARVTDGTEVMAS</sequence>
<organism>
    <name type="scientific">Acidobacterium capsulatum (strain ATCC 51196 / DSM 11244 / BCRC 80197 / JCM 7670 / NBRC 15755 / NCIMB 13165 / 161)</name>
    <dbReference type="NCBI Taxonomy" id="240015"/>
    <lineage>
        <taxon>Bacteria</taxon>
        <taxon>Pseudomonadati</taxon>
        <taxon>Acidobacteriota</taxon>
        <taxon>Terriglobia</taxon>
        <taxon>Terriglobales</taxon>
        <taxon>Acidobacteriaceae</taxon>
        <taxon>Acidobacterium</taxon>
    </lineage>
</organism>
<feature type="chain" id="PRO_1000118326" description="Acetylglutamate kinase">
    <location>
        <begin position="1"/>
        <end position="260"/>
    </location>
</feature>
<feature type="binding site" evidence="1">
    <location>
        <begin position="41"/>
        <end position="42"/>
    </location>
    <ligand>
        <name>substrate</name>
    </ligand>
</feature>
<feature type="binding site" evidence="1">
    <location>
        <position position="63"/>
    </location>
    <ligand>
        <name>substrate</name>
    </ligand>
</feature>
<feature type="binding site" evidence="1">
    <location>
        <position position="157"/>
    </location>
    <ligand>
        <name>substrate</name>
    </ligand>
</feature>
<feature type="site" description="Transition state stabilizer" evidence="1">
    <location>
        <position position="6"/>
    </location>
</feature>
<feature type="site" description="Transition state stabilizer" evidence="1">
    <location>
        <position position="217"/>
    </location>
</feature>
<gene>
    <name evidence="1" type="primary">argB</name>
    <name type="ordered locus">ACP_2994</name>
</gene>
<reference key="1">
    <citation type="journal article" date="2009" name="Appl. Environ. Microbiol.">
        <title>Three genomes from the phylum Acidobacteria provide insight into the lifestyles of these microorganisms in soils.</title>
        <authorList>
            <person name="Ward N.L."/>
            <person name="Challacombe J.F."/>
            <person name="Janssen P.H."/>
            <person name="Henrissat B."/>
            <person name="Coutinho P.M."/>
            <person name="Wu M."/>
            <person name="Xie G."/>
            <person name="Haft D.H."/>
            <person name="Sait M."/>
            <person name="Badger J."/>
            <person name="Barabote R.D."/>
            <person name="Bradley B."/>
            <person name="Brettin T.S."/>
            <person name="Brinkac L.M."/>
            <person name="Bruce D."/>
            <person name="Creasy T."/>
            <person name="Daugherty S.C."/>
            <person name="Davidsen T.M."/>
            <person name="DeBoy R.T."/>
            <person name="Detter J.C."/>
            <person name="Dodson R.J."/>
            <person name="Durkin A.S."/>
            <person name="Ganapathy A."/>
            <person name="Gwinn-Giglio M."/>
            <person name="Han C.S."/>
            <person name="Khouri H."/>
            <person name="Kiss H."/>
            <person name="Kothari S.P."/>
            <person name="Madupu R."/>
            <person name="Nelson K.E."/>
            <person name="Nelson W.C."/>
            <person name="Paulsen I."/>
            <person name="Penn K."/>
            <person name="Ren Q."/>
            <person name="Rosovitz M.J."/>
            <person name="Selengut J.D."/>
            <person name="Shrivastava S."/>
            <person name="Sullivan S.A."/>
            <person name="Tapia R."/>
            <person name="Thompson L.S."/>
            <person name="Watkins K.L."/>
            <person name="Yang Q."/>
            <person name="Yu C."/>
            <person name="Zafar N."/>
            <person name="Zhou L."/>
            <person name="Kuske C.R."/>
        </authorList>
    </citation>
    <scope>NUCLEOTIDE SEQUENCE [LARGE SCALE GENOMIC DNA]</scope>
    <source>
        <strain>ATCC 51196 / DSM 11244 / BCRC 80197 / JCM 7670 / NBRC 15755 / NCIMB 13165 / 161</strain>
    </source>
</reference>
<accession>C1F4F1</accession>
<keyword id="KW-0028">Amino-acid biosynthesis</keyword>
<keyword id="KW-0055">Arginine biosynthesis</keyword>
<keyword id="KW-0067">ATP-binding</keyword>
<keyword id="KW-0963">Cytoplasm</keyword>
<keyword id="KW-0418">Kinase</keyword>
<keyword id="KW-0547">Nucleotide-binding</keyword>
<keyword id="KW-1185">Reference proteome</keyword>
<keyword id="KW-0808">Transferase</keyword>
<evidence type="ECO:0000255" key="1">
    <source>
        <dbReference type="HAMAP-Rule" id="MF_00082"/>
    </source>
</evidence>
<protein>
    <recommendedName>
        <fullName evidence="1">Acetylglutamate kinase</fullName>
        <ecNumber evidence="1">2.7.2.8</ecNumber>
    </recommendedName>
    <alternativeName>
        <fullName evidence="1">N-acetyl-L-glutamate 5-phosphotransferase</fullName>
    </alternativeName>
    <alternativeName>
        <fullName evidence="1">NAG kinase</fullName>
        <shortName evidence="1">NAGK</shortName>
    </alternativeName>
</protein>
<name>ARGB_ACIC5</name>
<dbReference type="EC" id="2.7.2.8" evidence="1"/>
<dbReference type="EMBL" id="CP001472">
    <property type="protein sequence ID" value="ACO32068.1"/>
    <property type="molecule type" value="Genomic_DNA"/>
</dbReference>
<dbReference type="RefSeq" id="WP_015898043.1">
    <property type="nucleotide sequence ID" value="NC_012483.1"/>
</dbReference>
<dbReference type="SMR" id="C1F4F1"/>
<dbReference type="FunCoup" id="C1F4F1">
    <property type="interactions" value="325"/>
</dbReference>
<dbReference type="STRING" id="240015.ACP_2994"/>
<dbReference type="KEGG" id="aca:ACP_2994"/>
<dbReference type="eggNOG" id="COG0548">
    <property type="taxonomic scope" value="Bacteria"/>
</dbReference>
<dbReference type="HOGENOM" id="CLU_053680_1_0_0"/>
<dbReference type="InParanoid" id="C1F4F1"/>
<dbReference type="OrthoDB" id="9803155at2"/>
<dbReference type="UniPathway" id="UPA00068">
    <property type="reaction ID" value="UER00107"/>
</dbReference>
<dbReference type="Proteomes" id="UP000002207">
    <property type="component" value="Chromosome"/>
</dbReference>
<dbReference type="GO" id="GO:0005737">
    <property type="term" value="C:cytoplasm"/>
    <property type="evidence" value="ECO:0007669"/>
    <property type="project" value="UniProtKB-SubCell"/>
</dbReference>
<dbReference type="GO" id="GO:0003991">
    <property type="term" value="F:acetylglutamate kinase activity"/>
    <property type="evidence" value="ECO:0007669"/>
    <property type="project" value="UniProtKB-UniRule"/>
</dbReference>
<dbReference type="GO" id="GO:0005524">
    <property type="term" value="F:ATP binding"/>
    <property type="evidence" value="ECO:0007669"/>
    <property type="project" value="UniProtKB-UniRule"/>
</dbReference>
<dbReference type="GO" id="GO:0042450">
    <property type="term" value="P:arginine biosynthetic process via ornithine"/>
    <property type="evidence" value="ECO:0007669"/>
    <property type="project" value="UniProtKB-UniRule"/>
</dbReference>
<dbReference type="GO" id="GO:0006526">
    <property type="term" value="P:L-arginine biosynthetic process"/>
    <property type="evidence" value="ECO:0007669"/>
    <property type="project" value="UniProtKB-UniPathway"/>
</dbReference>
<dbReference type="CDD" id="cd04238">
    <property type="entry name" value="AAK_NAGK-like"/>
    <property type="match status" value="1"/>
</dbReference>
<dbReference type="Gene3D" id="3.40.1160.10">
    <property type="entry name" value="Acetylglutamate kinase-like"/>
    <property type="match status" value="1"/>
</dbReference>
<dbReference type="HAMAP" id="MF_00082">
    <property type="entry name" value="ArgB"/>
    <property type="match status" value="1"/>
</dbReference>
<dbReference type="InterPro" id="IPR036393">
    <property type="entry name" value="AceGlu_kinase-like_sf"/>
</dbReference>
<dbReference type="InterPro" id="IPR004662">
    <property type="entry name" value="AcgluKinase_fam"/>
</dbReference>
<dbReference type="InterPro" id="IPR037528">
    <property type="entry name" value="ArgB"/>
</dbReference>
<dbReference type="InterPro" id="IPR001048">
    <property type="entry name" value="Asp/Glu/Uridylate_kinase"/>
</dbReference>
<dbReference type="InterPro" id="IPR001057">
    <property type="entry name" value="Glu/AcGlu_kinase"/>
</dbReference>
<dbReference type="NCBIfam" id="TIGR00761">
    <property type="entry name" value="argB"/>
    <property type="match status" value="1"/>
</dbReference>
<dbReference type="PANTHER" id="PTHR23342">
    <property type="entry name" value="N-ACETYLGLUTAMATE SYNTHASE"/>
    <property type="match status" value="1"/>
</dbReference>
<dbReference type="PANTHER" id="PTHR23342:SF0">
    <property type="entry name" value="N-ACETYLGLUTAMATE SYNTHASE, MITOCHONDRIAL"/>
    <property type="match status" value="1"/>
</dbReference>
<dbReference type="Pfam" id="PF00696">
    <property type="entry name" value="AA_kinase"/>
    <property type="match status" value="1"/>
</dbReference>
<dbReference type="PIRSF" id="PIRSF000728">
    <property type="entry name" value="NAGK"/>
    <property type="match status" value="1"/>
</dbReference>
<dbReference type="PRINTS" id="PR00474">
    <property type="entry name" value="GLU5KINASE"/>
</dbReference>
<dbReference type="SUPFAM" id="SSF53633">
    <property type="entry name" value="Carbamate kinase-like"/>
    <property type="match status" value="1"/>
</dbReference>
<proteinExistence type="inferred from homology"/>
<comment type="function">
    <text evidence="1">Catalyzes the ATP-dependent phosphorylation of N-acetyl-L-glutamate.</text>
</comment>
<comment type="catalytic activity">
    <reaction evidence="1">
        <text>N-acetyl-L-glutamate + ATP = N-acetyl-L-glutamyl 5-phosphate + ADP</text>
        <dbReference type="Rhea" id="RHEA:14629"/>
        <dbReference type="ChEBI" id="CHEBI:30616"/>
        <dbReference type="ChEBI" id="CHEBI:44337"/>
        <dbReference type="ChEBI" id="CHEBI:57936"/>
        <dbReference type="ChEBI" id="CHEBI:456216"/>
        <dbReference type="EC" id="2.7.2.8"/>
    </reaction>
</comment>
<comment type="pathway">
    <text evidence="1">Amino-acid biosynthesis; L-arginine biosynthesis; N(2)-acetyl-L-ornithine from L-glutamate: step 2/4.</text>
</comment>
<comment type="subcellular location">
    <subcellularLocation>
        <location evidence="1">Cytoplasm</location>
    </subcellularLocation>
</comment>
<comment type="similarity">
    <text evidence="1">Belongs to the acetylglutamate kinase family. ArgB subfamily.</text>
</comment>